<proteinExistence type="inferred from homology"/>
<accession>Q211C5</accession>
<protein>
    <recommendedName>
        <fullName evidence="1">Large ribosomal subunit protein uL1</fullName>
    </recommendedName>
    <alternativeName>
        <fullName evidence="2">50S ribosomal protein L1</fullName>
    </alternativeName>
</protein>
<keyword id="KW-0678">Repressor</keyword>
<keyword id="KW-0687">Ribonucleoprotein</keyword>
<keyword id="KW-0689">Ribosomal protein</keyword>
<keyword id="KW-0694">RNA-binding</keyword>
<keyword id="KW-0699">rRNA-binding</keyword>
<keyword id="KW-0810">Translation regulation</keyword>
<keyword id="KW-0820">tRNA-binding</keyword>
<comment type="function">
    <text evidence="1">Binds directly to 23S rRNA. The L1 stalk is quite mobile in the ribosome, and is involved in E site tRNA release.</text>
</comment>
<comment type="function">
    <text evidence="1">Protein L1 is also a translational repressor protein, it controls the translation of the L11 operon by binding to its mRNA.</text>
</comment>
<comment type="subunit">
    <text evidence="1">Part of the 50S ribosomal subunit.</text>
</comment>
<comment type="similarity">
    <text evidence="1">Belongs to the universal ribosomal protein uL1 family.</text>
</comment>
<feature type="chain" id="PRO_0000308089" description="Large ribosomal subunit protein uL1">
    <location>
        <begin position="1"/>
        <end position="230"/>
    </location>
</feature>
<dbReference type="EMBL" id="CP000301">
    <property type="protein sequence ID" value="ABD89011.1"/>
    <property type="molecule type" value="Genomic_DNA"/>
</dbReference>
<dbReference type="SMR" id="Q211C5"/>
<dbReference type="STRING" id="316056.RPC_3471"/>
<dbReference type="KEGG" id="rpc:RPC_3471"/>
<dbReference type="eggNOG" id="COG0081">
    <property type="taxonomic scope" value="Bacteria"/>
</dbReference>
<dbReference type="HOGENOM" id="CLU_062853_0_0_5"/>
<dbReference type="OrthoDB" id="9803740at2"/>
<dbReference type="GO" id="GO:0022625">
    <property type="term" value="C:cytosolic large ribosomal subunit"/>
    <property type="evidence" value="ECO:0007669"/>
    <property type="project" value="TreeGrafter"/>
</dbReference>
<dbReference type="GO" id="GO:0019843">
    <property type="term" value="F:rRNA binding"/>
    <property type="evidence" value="ECO:0007669"/>
    <property type="project" value="UniProtKB-UniRule"/>
</dbReference>
<dbReference type="GO" id="GO:0003735">
    <property type="term" value="F:structural constituent of ribosome"/>
    <property type="evidence" value="ECO:0007669"/>
    <property type="project" value="InterPro"/>
</dbReference>
<dbReference type="GO" id="GO:0000049">
    <property type="term" value="F:tRNA binding"/>
    <property type="evidence" value="ECO:0007669"/>
    <property type="project" value="UniProtKB-KW"/>
</dbReference>
<dbReference type="GO" id="GO:0006417">
    <property type="term" value="P:regulation of translation"/>
    <property type="evidence" value="ECO:0007669"/>
    <property type="project" value="UniProtKB-KW"/>
</dbReference>
<dbReference type="GO" id="GO:0006412">
    <property type="term" value="P:translation"/>
    <property type="evidence" value="ECO:0007669"/>
    <property type="project" value="UniProtKB-UniRule"/>
</dbReference>
<dbReference type="CDD" id="cd00403">
    <property type="entry name" value="Ribosomal_L1"/>
    <property type="match status" value="1"/>
</dbReference>
<dbReference type="FunFam" id="3.40.50.790:FF:000001">
    <property type="entry name" value="50S ribosomal protein L1"/>
    <property type="match status" value="1"/>
</dbReference>
<dbReference type="Gene3D" id="3.30.190.20">
    <property type="match status" value="1"/>
</dbReference>
<dbReference type="Gene3D" id="3.40.50.790">
    <property type="match status" value="1"/>
</dbReference>
<dbReference type="HAMAP" id="MF_01318_B">
    <property type="entry name" value="Ribosomal_uL1_B"/>
    <property type="match status" value="1"/>
</dbReference>
<dbReference type="InterPro" id="IPR005878">
    <property type="entry name" value="Ribosom_uL1_bac-type"/>
</dbReference>
<dbReference type="InterPro" id="IPR002143">
    <property type="entry name" value="Ribosomal_uL1"/>
</dbReference>
<dbReference type="InterPro" id="IPR023674">
    <property type="entry name" value="Ribosomal_uL1-like"/>
</dbReference>
<dbReference type="InterPro" id="IPR028364">
    <property type="entry name" value="Ribosomal_uL1/biogenesis"/>
</dbReference>
<dbReference type="InterPro" id="IPR016095">
    <property type="entry name" value="Ribosomal_uL1_3-a/b-sand"/>
</dbReference>
<dbReference type="InterPro" id="IPR023673">
    <property type="entry name" value="Ribosomal_uL1_CS"/>
</dbReference>
<dbReference type="NCBIfam" id="TIGR01169">
    <property type="entry name" value="rplA_bact"/>
    <property type="match status" value="1"/>
</dbReference>
<dbReference type="PANTHER" id="PTHR36427">
    <property type="entry name" value="54S RIBOSOMAL PROTEIN L1, MITOCHONDRIAL"/>
    <property type="match status" value="1"/>
</dbReference>
<dbReference type="PANTHER" id="PTHR36427:SF3">
    <property type="entry name" value="LARGE RIBOSOMAL SUBUNIT PROTEIN UL1M"/>
    <property type="match status" value="1"/>
</dbReference>
<dbReference type="Pfam" id="PF00687">
    <property type="entry name" value="Ribosomal_L1"/>
    <property type="match status" value="1"/>
</dbReference>
<dbReference type="PIRSF" id="PIRSF002155">
    <property type="entry name" value="Ribosomal_L1"/>
    <property type="match status" value="1"/>
</dbReference>
<dbReference type="SUPFAM" id="SSF56808">
    <property type="entry name" value="Ribosomal protein L1"/>
    <property type="match status" value="1"/>
</dbReference>
<dbReference type="PROSITE" id="PS01199">
    <property type="entry name" value="RIBOSOMAL_L1"/>
    <property type="match status" value="1"/>
</dbReference>
<name>RL1_RHOPB</name>
<reference key="1">
    <citation type="submission" date="2006-03" db="EMBL/GenBank/DDBJ databases">
        <title>Complete sequence of Rhodopseudomonas palustris BisB18.</title>
        <authorList>
            <consortium name="US DOE Joint Genome Institute"/>
            <person name="Copeland A."/>
            <person name="Lucas S."/>
            <person name="Lapidus A."/>
            <person name="Barry K."/>
            <person name="Detter J.C."/>
            <person name="Glavina del Rio T."/>
            <person name="Hammon N."/>
            <person name="Israni S."/>
            <person name="Dalin E."/>
            <person name="Tice H."/>
            <person name="Pitluck S."/>
            <person name="Chain P."/>
            <person name="Malfatti S."/>
            <person name="Shin M."/>
            <person name="Vergez L."/>
            <person name="Schmutz J."/>
            <person name="Larimer F."/>
            <person name="Land M."/>
            <person name="Hauser L."/>
            <person name="Pelletier D.A."/>
            <person name="Kyrpides N."/>
            <person name="Anderson I."/>
            <person name="Oda Y."/>
            <person name="Harwood C.S."/>
            <person name="Richardson P."/>
        </authorList>
    </citation>
    <scope>NUCLEOTIDE SEQUENCE [LARGE SCALE GENOMIC DNA]</scope>
    <source>
        <strain>BisB18</strain>
    </source>
</reference>
<gene>
    <name evidence="1" type="primary">rplA</name>
    <name type="ordered locus">RPC_3471</name>
</gene>
<organism>
    <name type="scientific">Rhodopseudomonas palustris (strain BisB18)</name>
    <dbReference type="NCBI Taxonomy" id="316056"/>
    <lineage>
        <taxon>Bacteria</taxon>
        <taxon>Pseudomonadati</taxon>
        <taxon>Pseudomonadota</taxon>
        <taxon>Alphaproteobacteria</taxon>
        <taxon>Hyphomicrobiales</taxon>
        <taxon>Nitrobacteraceae</taxon>
        <taxon>Rhodopseudomonas</taxon>
    </lineage>
</organism>
<evidence type="ECO:0000255" key="1">
    <source>
        <dbReference type="HAMAP-Rule" id="MF_01318"/>
    </source>
</evidence>
<evidence type="ECO:0000305" key="2"/>
<sequence length="230" mass="24077">MAIGKRLKKAREGVDREKLYPLADAIKMVKERAVSKFDETIEIAINLGVDPRHADQMVRGVVTLPNGTGRTLRVGVFARGAKADEARAAGADVVGAEDLVEKVQGGTIEFDRCIATPDMMPLVGRLGKVLGPRGMMPNPKIGTVTMDITNAVKGAKGGSVEFRVEKAGIVQAGIGKASFGEDKLVENIKALTDAVSKAKPAGAKGTYIQRVAVSSTMGPGVKVEPGSILG</sequence>